<protein>
    <recommendedName>
        <fullName>Uncharacterized protein Rv2926c</fullName>
    </recommendedName>
</protein>
<gene>
    <name type="ordered locus">Rv2926c</name>
    <name type="ORF">MTCY338.15c</name>
</gene>
<reference key="1">
    <citation type="journal article" date="1998" name="Nature">
        <title>Deciphering the biology of Mycobacterium tuberculosis from the complete genome sequence.</title>
        <authorList>
            <person name="Cole S.T."/>
            <person name="Brosch R."/>
            <person name="Parkhill J."/>
            <person name="Garnier T."/>
            <person name="Churcher C.M."/>
            <person name="Harris D.E."/>
            <person name="Gordon S.V."/>
            <person name="Eiglmeier K."/>
            <person name="Gas S."/>
            <person name="Barry C.E. III"/>
            <person name="Tekaia F."/>
            <person name="Badcock K."/>
            <person name="Basham D."/>
            <person name="Brown D."/>
            <person name="Chillingworth T."/>
            <person name="Connor R."/>
            <person name="Davies R.M."/>
            <person name="Devlin K."/>
            <person name="Feltwell T."/>
            <person name="Gentles S."/>
            <person name="Hamlin N."/>
            <person name="Holroyd S."/>
            <person name="Hornsby T."/>
            <person name="Jagels K."/>
            <person name="Krogh A."/>
            <person name="McLean J."/>
            <person name="Moule S."/>
            <person name="Murphy L.D."/>
            <person name="Oliver S."/>
            <person name="Osborne J."/>
            <person name="Quail M.A."/>
            <person name="Rajandream M.A."/>
            <person name="Rogers J."/>
            <person name="Rutter S."/>
            <person name="Seeger K."/>
            <person name="Skelton S."/>
            <person name="Squares S."/>
            <person name="Squares R."/>
            <person name="Sulston J.E."/>
            <person name="Taylor K."/>
            <person name="Whitehead S."/>
            <person name="Barrell B.G."/>
        </authorList>
    </citation>
    <scope>NUCLEOTIDE SEQUENCE [LARGE SCALE GENOMIC DNA]</scope>
    <source>
        <strain>ATCC 25618 / H37Rv</strain>
    </source>
</reference>
<reference key="2">
    <citation type="journal article" date="2011" name="Mol. Cell. Proteomics">
        <title>Proteogenomic analysis of Mycobacterium tuberculosis by high resolution mass spectrometry.</title>
        <authorList>
            <person name="Kelkar D.S."/>
            <person name="Kumar D."/>
            <person name="Kumar P."/>
            <person name="Balakrishnan L."/>
            <person name="Muthusamy B."/>
            <person name="Yadav A.K."/>
            <person name="Shrivastava P."/>
            <person name="Marimuthu A."/>
            <person name="Anand S."/>
            <person name="Sundaram H."/>
            <person name="Kingsbury R."/>
            <person name="Harsha H.C."/>
            <person name="Nair B."/>
            <person name="Prasad T.S."/>
            <person name="Chauhan D.S."/>
            <person name="Katoch K."/>
            <person name="Katoch V.M."/>
            <person name="Kumar P."/>
            <person name="Chaerkady R."/>
            <person name="Ramachandran S."/>
            <person name="Dash D."/>
            <person name="Pandey A."/>
        </authorList>
    </citation>
    <scope>IDENTIFICATION BY MASS SPECTROMETRY [LARGE SCALE ANALYSIS]</scope>
    <source>
        <strain>ATCC 25618 / H37Rv</strain>
    </source>
</reference>
<evidence type="ECO:0000305" key="1"/>
<accession>P9WL17</accession>
<accession>L0TCM9</accession>
<accession>P65057</accession>
<accession>Q10972</accession>
<comment type="similarity">
    <text evidence="1">To M.leprae ML1660.</text>
</comment>
<name>Y2926_MYCTU</name>
<keyword id="KW-1185">Reference proteome</keyword>
<dbReference type="EMBL" id="AL123456">
    <property type="protein sequence ID" value="CCP45729.1"/>
    <property type="molecule type" value="Genomic_DNA"/>
</dbReference>
<dbReference type="PIR" id="F70748">
    <property type="entry name" value="F70748"/>
</dbReference>
<dbReference type="RefSeq" id="NP_217442.1">
    <property type="nucleotide sequence ID" value="NC_000962.3"/>
</dbReference>
<dbReference type="RefSeq" id="WP_003414824.1">
    <property type="nucleotide sequence ID" value="NC_000962.3"/>
</dbReference>
<dbReference type="FunCoup" id="P9WL17">
    <property type="interactions" value="6"/>
</dbReference>
<dbReference type="STRING" id="83332.Rv2926c"/>
<dbReference type="PaxDb" id="83332-Rv2926c"/>
<dbReference type="DNASU" id="887487"/>
<dbReference type="GeneID" id="887487"/>
<dbReference type="KEGG" id="mtu:Rv2926c"/>
<dbReference type="KEGG" id="mtv:RVBD_2926c"/>
<dbReference type="PATRIC" id="fig|83332.111.peg.3256"/>
<dbReference type="TubercuList" id="Rv2926c"/>
<dbReference type="eggNOG" id="COG1399">
    <property type="taxonomic scope" value="Bacteria"/>
</dbReference>
<dbReference type="InParanoid" id="P9WL17"/>
<dbReference type="OrthoDB" id="9790372at2"/>
<dbReference type="PhylomeDB" id="P9WL17"/>
<dbReference type="Proteomes" id="UP000001584">
    <property type="component" value="Chromosome"/>
</dbReference>
<dbReference type="InterPro" id="IPR003772">
    <property type="entry name" value="YceD"/>
</dbReference>
<dbReference type="PANTHER" id="PTHR34374">
    <property type="entry name" value="LARGE RIBOSOMAL RNA SUBUNIT ACCUMULATION PROTEIN YCED HOMOLOG 1, CHLOROPLASTIC"/>
    <property type="match status" value="1"/>
</dbReference>
<dbReference type="PANTHER" id="PTHR34374:SF1">
    <property type="entry name" value="LARGE RIBOSOMAL RNA SUBUNIT ACCUMULATION PROTEIN YCED HOMOLOG 1, CHLOROPLASTIC"/>
    <property type="match status" value="1"/>
</dbReference>
<dbReference type="Pfam" id="PF02620">
    <property type="entry name" value="YceD"/>
    <property type="match status" value="1"/>
</dbReference>
<sequence length="207" mass="22411">MDLGGVRRRISLMARQHGPTAQRHVASPMTVDIARLGRRPGAMFELHDTVHSPARIGLELIAIDQGALLDLDLRVESVSEGVLVTGTVAAPTVGECARCLSPVRGRVQVALTELFAYPDSATDETTEEDEVGRVVDETIDLEQPIIDAVGLELPFSPVCRPDCPGLCPQCGVPLASEPGHRHEQIDPRWAKLVEMLGPESDTLRGER</sequence>
<organism>
    <name type="scientific">Mycobacterium tuberculosis (strain ATCC 25618 / H37Rv)</name>
    <dbReference type="NCBI Taxonomy" id="83332"/>
    <lineage>
        <taxon>Bacteria</taxon>
        <taxon>Bacillati</taxon>
        <taxon>Actinomycetota</taxon>
        <taxon>Actinomycetes</taxon>
        <taxon>Mycobacteriales</taxon>
        <taxon>Mycobacteriaceae</taxon>
        <taxon>Mycobacterium</taxon>
        <taxon>Mycobacterium tuberculosis complex</taxon>
    </lineage>
</organism>
<proteinExistence type="evidence at protein level"/>
<feature type="chain" id="PRO_0000104106" description="Uncharacterized protein Rv2926c">
    <location>
        <begin position="1"/>
        <end position="207"/>
    </location>
</feature>